<reference key="1">
    <citation type="journal article" date="2000" name="Nature">
        <title>DNA sequence of both chromosomes of the cholera pathogen Vibrio cholerae.</title>
        <authorList>
            <person name="Heidelberg J.F."/>
            <person name="Eisen J.A."/>
            <person name="Nelson W.C."/>
            <person name="Clayton R.A."/>
            <person name="Gwinn M.L."/>
            <person name="Dodson R.J."/>
            <person name="Haft D.H."/>
            <person name="Hickey E.K."/>
            <person name="Peterson J.D."/>
            <person name="Umayam L.A."/>
            <person name="Gill S.R."/>
            <person name="Nelson K.E."/>
            <person name="Read T.D."/>
            <person name="Tettelin H."/>
            <person name="Richardson D.L."/>
            <person name="Ermolaeva M.D."/>
            <person name="Vamathevan J.J."/>
            <person name="Bass S."/>
            <person name="Qin H."/>
            <person name="Dragoi I."/>
            <person name="Sellers P."/>
            <person name="McDonald L.A."/>
            <person name="Utterback T.R."/>
            <person name="Fleischmann R.D."/>
            <person name="Nierman W.C."/>
            <person name="White O."/>
            <person name="Salzberg S.L."/>
            <person name="Smith H.O."/>
            <person name="Colwell R.R."/>
            <person name="Mekalanos J.J."/>
            <person name="Venter J.C."/>
            <person name="Fraser C.M."/>
        </authorList>
    </citation>
    <scope>NUCLEOTIDE SEQUENCE [LARGE SCALE GENOMIC DNA]</scope>
    <source>
        <strain>ATCC 39315 / El Tor Inaba N16961</strain>
    </source>
</reference>
<comment type="function">
    <text evidence="1">Catalyzes the base-exchange of a guanine (G) residue with the queuine precursor 7-aminomethyl-7-deazaguanine (PreQ1) at position 34 (anticodon wobble position) in tRNAs with GU(N) anticodons (tRNA-Asp, -Asn, -His and -Tyr). Catalysis occurs through a double-displacement mechanism. The nucleophile active site attacks the C1' of nucleotide 34 to detach the guanine base from the RNA, forming a covalent enzyme-RNA intermediate. The proton acceptor active site deprotonates the incoming PreQ1, allowing a nucleophilic attack on the C1' of the ribose to form the product. After dissociation, two additional enzymatic reactions on the tRNA convert PreQ1 to queuine (Q), resulting in the hypermodified nucleoside queuosine (7-(((4,5-cis-dihydroxy-2-cyclopenten-1-yl)amino)methyl)-7-deazaguanosine).</text>
</comment>
<comment type="catalytic activity">
    <reaction evidence="1">
        <text>7-aminomethyl-7-carbaguanine + guanosine(34) in tRNA = 7-aminomethyl-7-carbaguanosine(34) in tRNA + guanine</text>
        <dbReference type="Rhea" id="RHEA:24104"/>
        <dbReference type="Rhea" id="RHEA-COMP:10341"/>
        <dbReference type="Rhea" id="RHEA-COMP:10342"/>
        <dbReference type="ChEBI" id="CHEBI:16235"/>
        <dbReference type="ChEBI" id="CHEBI:58703"/>
        <dbReference type="ChEBI" id="CHEBI:74269"/>
        <dbReference type="ChEBI" id="CHEBI:82833"/>
        <dbReference type="EC" id="2.4.2.29"/>
    </reaction>
</comment>
<comment type="cofactor">
    <cofactor evidence="1">
        <name>Zn(2+)</name>
        <dbReference type="ChEBI" id="CHEBI:29105"/>
    </cofactor>
    <text evidence="1">Binds 1 zinc ion per subunit.</text>
</comment>
<comment type="pathway">
    <text evidence="1">tRNA modification; tRNA-queuosine biosynthesis.</text>
</comment>
<comment type="subunit">
    <text evidence="1">Homodimer. Within each dimer, one monomer is responsible for RNA recognition and catalysis, while the other monomer binds to the replacement base PreQ1.</text>
</comment>
<comment type="similarity">
    <text evidence="1">Belongs to the queuine tRNA-ribosyltransferase family.</text>
</comment>
<evidence type="ECO:0000255" key="1">
    <source>
        <dbReference type="HAMAP-Rule" id="MF_00168"/>
    </source>
</evidence>
<feature type="chain" id="PRO_0000135550" description="Queuine tRNA-ribosyltransferase">
    <location>
        <begin position="1"/>
        <end position="379"/>
    </location>
</feature>
<feature type="region of interest" description="RNA binding" evidence="1">
    <location>
        <begin position="247"/>
        <end position="253"/>
    </location>
</feature>
<feature type="region of interest" description="RNA binding; important for wobble base 34 recognition" evidence="1">
    <location>
        <begin position="271"/>
        <end position="275"/>
    </location>
</feature>
<feature type="active site" description="Proton acceptor" evidence="1">
    <location>
        <position position="91"/>
    </location>
</feature>
<feature type="active site" description="Nucleophile" evidence="1">
    <location>
        <position position="266"/>
    </location>
</feature>
<feature type="binding site" evidence="1">
    <location>
        <begin position="91"/>
        <end position="95"/>
    </location>
    <ligand>
        <name>substrate</name>
    </ligand>
</feature>
<feature type="binding site" evidence="1">
    <location>
        <position position="145"/>
    </location>
    <ligand>
        <name>substrate</name>
    </ligand>
</feature>
<feature type="binding site" evidence="1">
    <location>
        <position position="189"/>
    </location>
    <ligand>
        <name>substrate</name>
    </ligand>
</feature>
<feature type="binding site" evidence="1">
    <location>
        <position position="216"/>
    </location>
    <ligand>
        <name>substrate</name>
    </ligand>
</feature>
<feature type="binding site" evidence="1">
    <location>
        <position position="304"/>
    </location>
    <ligand>
        <name>Zn(2+)</name>
        <dbReference type="ChEBI" id="CHEBI:29105"/>
    </ligand>
</feature>
<feature type="binding site" evidence="1">
    <location>
        <position position="306"/>
    </location>
    <ligand>
        <name>Zn(2+)</name>
        <dbReference type="ChEBI" id="CHEBI:29105"/>
    </ligand>
</feature>
<feature type="binding site" evidence="1">
    <location>
        <position position="309"/>
    </location>
    <ligand>
        <name>Zn(2+)</name>
        <dbReference type="ChEBI" id="CHEBI:29105"/>
    </ligand>
</feature>
<feature type="binding site" evidence="1">
    <location>
        <position position="335"/>
    </location>
    <ligand>
        <name>Zn(2+)</name>
        <dbReference type="ChEBI" id="CHEBI:29105"/>
    </ligand>
</feature>
<organism>
    <name type="scientific">Vibrio cholerae serotype O1 (strain ATCC 39315 / El Tor Inaba N16961)</name>
    <dbReference type="NCBI Taxonomy" id="243277"/>
    <lineage>
        <taxon>Bacteria</taxon>
        <taxon>Pseudomonadati</taxon>
        <taxon>Pseudomonadota</taxon>
        <taxon>Gammaproteobacteria</taxon>
        <taxon>Vibrionales</taxon>
        <taxon>Vibrionaceae</taxon>
        <taxon>Vibrio</taxon>
    </lineage>
</organism>
<name>TGT_VIBCH</name>
<gene>
    <name evidence="1" type="primary">tgt</name>
    <name type="ordered locus">VC_0741</name>
</gene>
<keyword id="KW-0328">Glycosyltransferase</keyword>
<keyword id="KW-0479">Metal-binding</keyword>
<keyword id="KW-0671">Queuosine biosynthesis</keyword>
<keyword id="KW-1185">Reference proteome</keyword>
<keyword id="KW-0808">Transferase</keyword>
<keyword id="KW-0819">tRNA processing</keyword>
<keyword id="KW-0862">Zinc</keyword>
<protein>
    <recommendedName>
        <fullName evidence="1">Queuine tRNA-ribosyltransferase</fullName>
        <ecNumber evidence="1">2.4.2.29</ecNumber>
    </recommendedName>
    <alternativeName>
        <fullName evidence="1">Guanine insertion enzyme</fullName>
    </alternativeName>
    <alternativeName>
        <fullName evidence="1">tRNA-guanine transglycosylase</fullName>
    </alternativeName>
</protein>
<proteinExistence type="inferred from homology"/>
<dbReference type="EC" id="2.4.2.29" evidence="1"/>
<dbReference type="EMBL" id="AE003852">
    <property type="protein sequence ID" value="AAF93906.1"/>
    <property type="molecule type" value="Genomic_DNA"/>
</dbReference>
<dbReference type="PIR" id="H82284">
    <property type="entry name" value="H82284"/>
</dbReference>
<dbReference type="RefSeq" id="NP_230390.1">
    <property type="nucleotide sequence ID" value="NC_002505.1"/>
</dbReference>
<dbReference type="RefSeq" id="WP_000768200.1">
    <property type="nucleotide sequence ID" value="NZ_LT906614.1"/>
</dbReference>
<dbReference type="SMR" id="Q9KTY9"/>
<dbReference type="STRING" id="243277.VC_0741"/>
<dbReference type="DNASU" id="2615750"/>
<dbReference type="EnsemblBacteria" id="AAF93906">
    <property type="protein sequence ID" value="AAF93906"/>
    <property type="gene ID" value="VC_0741"/>
</dbReference>
<dbReference type="GeneID" id="89515114"/>
<dbReference type="KEGG" id="vch:VC_0741"/>
<dbReference type="PATRIC" id="fig|243277.26.peg.705"/>
<dbReference type="eggNOG" id="COG0343">
    <property type="taxonomic scope" value="Bacteria"/>
</dbReference>
<dbReference type="HOGENOM" id="CLU_022060_0_1_6"/>
<dbReference type="UniPathway" id="UPA00392"/>
<dbReference type="Proteomes" id="UP000000584">
    <property type="component" value="Chromosome 1"/>
</dbReference>
<dbReference type="GO" id="GO:0005737">
    <property type="term" value="C:cytoplasm"/>
    <property type="evidence" value="ECO:0000318"/>
    <property type="project" value="GO_Central"/>
</dbReference>
<dbReference type="GO" id="GO:0005829">
    <property type="term" value="C:cytosol"/>
    <property type="evidence" value="ECO:0000318"/>
    <property type="project" value="GO_Central"/>
</dbReference>
<dbReference type="GO" id="GO:0046872">
    <property type="term" value="F:metal ion binding"/>
    <property type="evidence" value="ECO:0007669"/>
    <property type="project" value="UniProtKB-KW"/>
</dbReference>
<dbReference type="GO" id="GO:0008479">
    <property type="term" value="F:tRNA-guanosine(34) queuine transglycosylase activity"/>
    <property type="evidence" value="ECO:0007669"/>
    <property type="project" value="UniProtKB-UniRule"/>
</dbReference>
<dbReference type="GO" id="GO:0008616">
    <property type="term" value="P:queuosine biosynthetic process"/>
    <property type="evidence" value="ECO:0000318"/>
    <property type="project" value="GO_Central"/>
</dbReference>
<dbReference type="GO" id="GO:0002099">
    <property type="term" value="P:tRNA wobble guanine modification"/>
    <property type="evidence" value="ECO:0000318"/>
    <property type="project" value="GO_Central"/>
</dbReference>
<dbReference type="GO" id="GO:0101030">
    <property type="term" value="P:tRNA-guanine transglycosylation"/>
    <property type="evidence" value="ECO:0007669"/>
    <property type="project" value="InterPro"/>
</dbReference>
<dbReference type="FunFam" id="3.20.20.105:FF:000001">
    <property type="entry name" value="Queuine tRNA-ribosyltransferase"/>
    <property type="match status" value="1"/>
</dbReference>
<dbReference type="Gene3D" id="3.20.20.105">
    <property type="entry name" value="Queuine tRNA-ribosyltransferase-like"/>
    <property type="match status" value="1"/>
</dbReference>
<dbReference type="HAMAP" id="MF_00168">
    <property type="entry name" value="Q_tRNA_Tgt"/>
    <property type="match status" value="1"/>
</dbReference>
<dbReference type="InterPro" id="IPR050076">
    <property type="entry name" value="ArchSynthase1/Queuine_TRR"/>
</dbReference>
<dbReference type="InterPro" id="IPR004803">
    <property type="entry name" value="TGT"/>
</dbReference>
<dbReference type="InterPro" id="IPR036511">
    <property type="entry name" value="TGT-like_sf"/>
</dbReference>
<dbReference type="InterPro" id="IPR002616">
    <property type="entry name" value="tRNA_ribo_trans-like"/>
</dbReference>
<dbReference type="NCBIfam" id="TIGR00430">
    <property type="entry name" value="Q_tRNA_tgt"/>
    <property type="match status" value="1"/>
</dbReference>
<dbReference type="NCBIfam" id="TIGR00449">
    <property type="entry name" value="tgt_general"/>
    <property type="match status" value="1"/>
</dbReference>
<dbReference type="PANTHER" id="PTHR46499">
    <property type="entry name" value="QUEUINE TRNA-RIBOSYLTRANSFERASE"/>
    <property type="match status" value="1"/>
</dbReference>
<dbReference type="PANTHER" id="PTHR46499:SF1">
    <property type="entry name" value="QUEUINE TRNA-RIBOSYLTRANSFERASE"/>
    <property type="match status" value="1"/>
</dbReference>
<dbReference type="Pfam" id="PF01702">
    <property type="entry name" value="TGT"/>
    <property type="match status" value="1"/>
</dbReference>
<dbReference type="SUPFAM" id="SSF51713">
    <property type="entry name" value="tRNA-guanine transglycosylase"/>
    <property type="match status" value="1"/>
</dbReference>
<sequence>MKLKFELKKKNGNARRGQLIFERGTVQTPAFMPVGTYGTVKGMTPEEVKETGAQILLGNTFHLWLRPGQEVMKMHGDLHDFMNWQGPILTDSGGFQVFSLGDIRKITEEGVHFRNPVNGDKIFMDAEKSMEIQKDLGSDIVMIFDECTPYPATHDEAKKSMEMSLRWAKRSRDHFDKLENPNNLFGIVQGGVYEDLRDVSVKGLTEIGFDGYAVGGLAVGEPKEDMHRVLEHTCPQLPEDKPRYLMGVGKPEDLVEGVRRGIDMFDCVMPTRNARNGHLFVTGGVIKIRNAAHKTDTTPLDPHCDCYTCKNYSKSYLHHLDRCNEILGARLNTIHNLRYYQRLMESIRKAIDEDRFDQFVAEFYARRNREVPPLQKDKA</sequence>
<accession>Q9KTY9</accession>